<dbReference type="EMBL" id="AE016879">
    <property type="protein sequence ID" value="AAP27998.1"/>
    <property type="molecule type" value="Genomic_DNA"/>
</dbReference>
<dbReference type="EMBL" id="AE017334">
    <property type="protein sequence ID" value="AAT33394.1"/>
    <property type="molecule type" value="Genomic_DNA"/>
</dbReference>
<dbReference type="EMBL" id="AE017225">
    <property type="protein sequence ID" value="AAT56269.1"/>
    <property type="molecule type" value="Genomic_DNA"/>
</dbReference>
<dbReference type="RefSeq" id="NP_846512.1">
    <property type="nucleotide sequence ID" value="NC_003997.3"/>
</dbReference>
<dbReference type="RefSeq" id="WP_001199756.1">
    <property type="nucleotide sequence ID" value="NZ_WXXJ01000027.1"/>
</dbReference>
<dbReference type="RefSeq" id="YP_030218.1">
    <property type="nucleotide sequence ID" value="NC_005945.1"/>
</dbReference>
<dbReference type="SMR" id="Q81MH0"/>
<dbReference type="STRING" id="261594.GBAA_4278"/>
<dbReference type="DNASU" id="1088143"/>
<dbReference type="GeneID" id="45023947"/>
<dbReference type="KEGG" id="ban:BA_4278"/>
<dbReference type="KEGG" id="bar:GBAA_4278"/>
<dbReference type="KEGG" id="bat:BAS3968"/>
<dbReference type="PATRIC" id="fig|198094.11.peg.4247"/>
<dbReference type="eggNOG" id="COG1354">
    <property type="taxonomic scope" value="Bacteria"/>
</dbReference>
<dbReference type="HOGENOM" id="CLU_038686_3_1_9"/>
<dbReference type="OMA" id="TRQYMGY"/>
<dbReference type="OrthoDB" id="9811016at2"/>
<dbReference type="Proteomes" id="UP000000427">
    <property type="component" value="Chromosome"/>
</dbReference>
<dbReference type="Proteomes" id="UP000000594">
    <property type="component" value="Chromosome"/>
</dbReference>
<dbReference type="GO" id="GO:0005737">
    <property type="term" value="C:cytoplasm"/>
    <property type="evidence" value="ECO:0007669"/>
    <property type="project" value="UniProtKB-SubCell"/>
</dbReference>
<dbReference type="GO" id="GO:0051301">
    <property type="term" value="P:cell division"/>
    <property type="evidence" value="ECO:0007669"/>
    <property type="project" value="UniProtKB-KW"/>
</dbReference>
<dbReference type="GO" id="GO:0007059">
    <property type="term" value="P:chromosome segregation"/>
    <property type="evidence" value="ECO:0007669"/>
    <property type="project" value="UniProtKB-UniRule"/>
</dbReference>
<dbReference type="GO" id="GO:0006260">
    <property type="term" value="P:DNA replication"/>
    <property type="evidence" value="ECO:0007669"/>
    <property type="project" value="UniProtKB-UniRule"/>
</dbReference>
<dbReference type="Gene3D" id="6.10.250.2410">
    <property type="match status" value="1"/>
</dbReference>
<dbReference type="Gene3D" id="1.10.10.580">
    <property type="entry name" value="Structural maintenance of chromosome 1. Chain E"/>
    <property type="match status" value="1"/>
</dbReference>
<dbReference type="HAMAP" id="MF_01805">
    <property type="entry name" value="ScpA"/>
    <property type="match status" value="1"/>
</dbReference>
<dbReference type="InterPro" id="IPR003768">
    <property type="entry name" value="ScpA"/>
</dbReference>
<dbReference type="InterPro" id="IPR023093">
    <property type="entry name" value="ScpA-like_C"/>
</dbReference>
<dbReference type="NCBIfam" id="NF000992">
    <property type="entry name" value="PRK00104.1-1"/>
    <property type="match status" value="1"/>
</dbReference>
<dbReference type="NCBIfam" id="NF000995">
    <property type="entry name" value="PRK00104.1-4"/>
    <property type="match status" value="1"/>
</dbReference>
<dbReference type="PANTHER" id="PTHR33969">
    <property type="entry name" value="SEGREGATION AND CONDENSATION PROTEIN A"/>
    <property type="match status" value="1"/>
</dbReference>
<dbReference type="PANTHER" id="PTHR33969:SF2">
    <property type="entry name" value="SEGREGATION AND CONDENSATION PROTEIN A"/>
    <property type="match status" value="1"/>
</dbReference>
<dbReference type="Pfam" id="PF02616">
    <property type="entry name" value="SMC_ScpA"/>
    <property type="match status" value="1"/>
</dbReference>
<proteinExistence type="inferred from homology"/>
<evidence type="ECO:0000255" key="1">
    <source>
        <dbReference type="HAMAP-Rule" id="MF_01805"/>
    </source>
</evidence>
<comment type="function">
    <text evidence="1">Participates in chromosomal partition during cell division. May act via the formation of a condensin-like complex containing Smc and ScpB that pull DNA away from mid-cell into both cell halves.</text>
</comment>
<comment type="subunit">
    <text evidence="1">Component of a cohesin-like complex composed of ScpA, ScpB and the Smc homodimer, in which ScpA and ScpB bind to the head domain of Smc. The presence of the three proteins is required for the association of the complex with DNA.</text>
</comment>
<comment type="subcellular location">
    <subcellularLocation>
        <location evidence="1">Cytoplasm</location>
    </subcellularLocation>
    <text evidence="1">Associated with two foci at the outer edges of the nucleoid region in young cells, and at four foci within both cell halves in older cells.</text>
</comment>
<comment type="similarity">
    <text evidence="1">Belongs to the ScpA family.</text>
</comment>
<feature type="chain" id="PRO_0000211075" description="Segregation and condensation protein A">
    <location>
        <begin position="1"/>
        <end position="247"/>
    </location>
</feature>
<sequence>MQYNFKVEAFEGPLDLLLHLIHRYEIDIYNIPVAEITEQYLSYVHTMKELQLDVASEYLVMAATLLQIKSKMLLPKHEEDVLDNGDDFIDDPRQELMERLIEYKKYKQVATELKEREQERAQLYTRPPIDFTSLQQEEETNLPLDVTLYDMLAAFQKLMRRKKAEKPVTTRITRQEIPIEQRMTDILKQLEIQGGRQSFYDLFVDDEREIMVVTFLAVLELMKNQQIIIEQEHNFDEIFVSSYTKSA</sequence>
<keyword id="KW-0131">Cell cycle</keyword>
<keyword id="KW-0132">Cell division</keyword>
<keyword id="KW-0159">Chromosome partition</keyword>
<keyword id="KW-0963">Cytoplasm</keyword>
<keyword id="KW-1185">Reference proteome</keyword>
<reference key="1">
    <citation type="journal article" date="2003" name="Nature">
        <title>The genome sequence of Bacillus anthracis Ames and comparison to closely related bacteria.</title>
        <authorList>
            <person name="Read T.D."/>
            <person name="Peterson S.N."/>
            <person name="Tourasse N.J."/>
            <person name="Baillie L.W."/>
            <person name="Paulsen I.T."/>
            <person name="Nelson K.E."/>
            <person name="Tettelin H."/>
            <person name="Fouts D.E."/>
            <person name="Eisen J.A."/>
            <person name="Gill S.R."/>
            <person name="Holtzapple E.K."/>
            <person name="Okstad O.A."/>
            <person name="Helgason E."/>
            <person name="Rilstone J."/>
            <person name="Wu M."/>
            <person name="Kolonay J.F."/>
            <person name="Beanan M.J."/>
            <person name="Dodson R.J."/>
            <person name="Brinkac L.M."/>
            <person name="Gwinn M.L."/>
            <person name="DeBoy R.T."/>
            <person name="Madpu R."/>
            <person name="Daugherty S.C."/>
            <person name="Durkin A.S."/>
            <person name="Haft D.H."/>
            <person name="Nelson W.C."/>
            <person name="Peterson J.D."/>
            <person name="Pop M."/>
            <person name="Khouri H.M."/>
            <person name="Radune D."/>
            <person name="Benton J.L."/>
            <person name="Mahamoud Y."/>
            <person name="Jiang L."/>
            <person name="Hance I.R."/>
            <person name="Weidman J.F."/>
            <person name="Berry K.J."/>
            <person name="Plaut R.D."/>
            <person name="Wolf A.M."/>
            <person name="Watkins K.L."/>
            <person name="Nierman W.C."/>
            <person name="Hazen A."/>
            <person name="Cline R.T."/>
            <person name="Redmond C."/>
            <person name="Thwaite J.E."/>
            <person name="White O."/>
            <person name="Salzberg S.L."/>
            <person name="Thomason B."/>
            <person name="Friedlander A.M."/>
            <person name="Koehler T.M."/>
            <person name="Hanna P.C."/>
            <person name="Kolstoe A.-B."/>
            <person name="Fraser C.M."/>
        </authorList>
    </citation>
    <scope>NUCLEOTIDE SEQUENCE [LARGE SCALE GENOMIC DNA]</scope>
    <source>
        <strain>Ames / isolate Porton</strain>
    </source>
</reference>
<reference key="2">
    <citation type="journal article" date="2009" name="J. Bacteriol.">
        <title>The complete genome sequence of Bacillus anthracis Ames 'Ancestor'.</title>
        <authorList>
            <person name="Ravel J."/>
            <person name="Jiang L."/>
            <person name="Stanley S.T."/>
            <person name="Wilson M.R."/>
            <person name="Decker R.S."/>
            <person name="Read T.D."/>
            <person name="Worsham P."/>
            <person name="Keim P.S."/>
            <person name="Salzberg S.L."/>
            <person name="Fraser-Liggett C.M."/>
            <person name="Rasko D.A."/>
        </authorList>
    </citation>
    <scope>NUCLEOTIDE SEQUENCE [LARGE SCALE GENOMIC DNA]</scope>
    <source>
        <strain>Ames ancestor</strain>
    </source>
</reference>
<reference key="3">
    <citation type="submission" date="2004-01" db="EMBL/GenBank/DDBJ databases">
        <title>Complete genome sequence of Bacillus anthracis Sterne.</title>
        <authorList>
            <person name="Brettin T.S."/>
            <person name="Bruce D."/>
            <person name="Challacombe J.F."/>
            <person name="Gilna P."/>
            <person name="Han C."/>
            <person name="Hill K."/>
            <person name="Hitchcock P."/>
            <person name="Jackson P."/>
            <person name="Keim P."/>
            <person name="Longmire J."/>
            <person name="Lucas S."/>
            <person name="Okinaka R."/>
            <person name="Richardson P."/>
            <person name="Rubin E."/>
            <person name="Tice H."/>
        </authorList>
    </citation>
    <scope>NUCLEOTIDE SEQUENCE [LARGE SCALE GENOMIC DNA]</scope>
    <source>
        <strain>Sterne</strain>
    </source>
</reference>
<protein>
    <recommendedName>
        <fullName evidence="1">Segregation and condensation protein A</fullName>
    </recommendedName>
</protein>
<organism>
    <name type="scientific">Bacillus anthracis</name>
    <dbReference type="NCBI Taxonomy" id="1392"/>
    <lineage>
        <taxon>Bacteria</taxon>
        <taxon>Bacillati</taxon>
        <taxon>Bacillota</taxon>
        <taxon>Bacilli</taxon>
        <taxon>Bacillales</taxon>
        <taxon>Bacillaceae</taxon>
        <taxon>Bacillus</taxon>
        <taxon>Bacillus cereus group</taxon>
    </lineage>
</organism>
<accession>Q81MH0</accession>
<accession>Q6HTX0</accession>
<accession>Q6KN53</accession>
<gene>
    <name evidence="1" type="primary">scpA</name>
    <name type="ordered locus">BA_4278</name>
    <name type="ordered locus">GBAA_4278</name>
    <name type="ordered locus">BAS3968</name>
</gene>
<name>SCPA_BACAN</name>